<proteinExistence type="inferred from homology"/>
<gene>
    <name evidence="1" type="primary">MT-ATP8</name>
    <name type="synonym">ATP8</name>
    <name type="synonym">ATPASE8</name>
    <name type="synonym">MTATP8</name>
</gene>
<name>ATP8_EQUAS</name>
<accession>P92479</accession>
<organism>
    <name type="scientific">Equus asinus</name>
    <name type="common">Donkey</name>
    <name type="synonym">Equus africanus asinus</name>
    <dbReference type="NCBI Taxonomy" id="9793"/>
    <lineage>
        <taxon>Eukaryota</taxon>
        <taxon>Metazoa</taxon>
        <taxon>Chordata</taxon>
        <taxon>Craniata</taxon>
        <taxon>Vertebrata</taxon>
        <taxon>Euteleostomi</taxon>
        <taxon>Mammalia</taxon>
        <taxon>Eutheria</taxon>
        <taxon>Laurasiatheria</taxon>
        <taxon>Perissodactyla</taxon>
        <taxon>Equidae</taxon>
        <taxon>Equus</taxon>
    </lineage>
</organism>
<evidence type="ECO:0000250" key="1">
    <source>
        <dbReference type="UniProtKB" id="P03928"/>
    </source>
</evidence>
<evidence type="ECO:0000250" key="2">
    <source>
        <dbReference type="UniProtKB" id="P03930"/>
    </source>
</evidence>
<evidence type="ECO:0000250" key="3">
    <source>
        <dbReference type="UniProtKB" id="P19483"/>
    </source>
</evidence>
<evidence type="ECO:0000255" key="4"/>
<evidence type="ECO:0000305" key="5"/>
<feature type="chain" id="PRO_0000195528" description="ATP synthase F(0) complex subunit 8">
    <location>
        <begin position="1"/>
        <end position="67"/>
    </location>
</feature>
<feature type="transmembrane region" description="Helical" evidence="4">
    <location>
        <begin position="8"/>
        <end position="24"/>
    </location>
</feature>
<feature type="modified residue" description="N6-acetyllysine; alternate" evidence="2">
    <location>
        <position position="54"/>
    </location>
</feature>
<feature type="modified residue" description="N6-succinyllysine; alternate" evidence="2">
    <location>
        <position position="54"/>
    </location>
</feature>
<feature type="modified residue" description="N6-acetyllysine" evidence="2">
    <location>
        <position position="57"/>
    </location>
</feature>
<comment type="function">
    <text evidence="1 3">Subunit 8, of the mitochondrial membrane ATP synthase complex (F(1)F(0) ATP synthase or Complex V) that produces ATP from ADP in the presence of a proton gradient across the membrane which is generated by electron transport complexes of the respiratory chain. ATP synthase complex consist of a soluble F(1) head domain - the catalytic core - and a membrane F(1) domain - the membrane proton channel. These two domains are linked by a central stalk rotating inside the F(1) region and a stationary peripheral stalk. During catalysis, ATP synthesis in the catalytic domain of F(1) is coupled via a rotary mechanism of the central stalk subunits to proton translocation (By similarity). In vivo, can only synthesize ATP although its ATP hydrolase activity can be activated artificially in vitro (By similarity). Part of the complex F(0) domain (By similarity).</text>
</comment>
<comment type="subunit">
    <text evidence="1">Component of the ATP synthase complex composed at least of ATP5F1A/subunit alpha, ATP5F1B/subunit beta, ATP5MC1/subunit c (homooctomer), MT-ATP6/subunit a, MT-ATP8/subunit 8, ATP5ME/subunit e, ATP5MF/subunit f, ATP5MG/subunit g, ATP5MK/subunit k, ATP5MJ/subunit j, ATP5F1C/subunit gamma, ATP5F1D/subunit delta, ATP5F1E/subunit epsilon, ATP5PF/subunit F6, ATP5PB/subunit b, ATP5PD/subunit d, ATP5PO/subunit OSCP. ATP synthase complex consists of a soluble F(1) head domain (subunits alpha(3) and beta(3)) - the catalytic core - and a membrane F(0) domain - the membrane proton channel (subunits c, a, 8, e, f, g, k and j). These two domains are linked by a central stalk (subunits gamma, delta, and epsilon) rotating inside the F1 region and a stationary peripheral stalk (subunits F6, b, d, and OSCP). Interacts with PRICKLE3.</text>
</comment>
<comment type="subcellular location">
    <subcellularLocation>
        <location>Mitochondrion membrane</location>
        <topology>Single-pass membrane protein</topology>
    </subcellularLocation>
</comment>
<comment type="similarity">
    <text evidence="5">Belongs to the ATPase protein 8 family.</text>
</comment>
<keyword id="KW-0007">Acetylation</keyword>
<keyword id="KW-0066">ATP synthesis</keyword>
<keyword id="KW-0138">CF(0)</keyword>
<keyword id="KW-0375">Hydrogen ion transport</keyword>
<keyword id="KW-0406">Ion transport</keyword>
<keyword id="KW-0472">Membrane</keyword>
<keyword id="KW-0496">Mitochondrion</keyword>
<keyword id="KW-1185">Reference proteome</keyword>
<keyword id="KW-0812">Transmembrane</keyword>
<keyword id="KW-1133">Transmembrane helix</keyword>
<keyword id="KW-0813">Transport</keyword>
<sequence length="67" mass="7908">MPQLDTSTWFINIVSMILTLFIVFQLKISKHSYPMHPEAKTTKMAKRLTPWESKWTKIYSPLSLPQQ</sequence>
<dbReference type="EMBL" id="X97337">
    <property type="protein sequence ID" value="CAA66018.1"/>
    <property type="molecule type" value="Genomic_DNA"/>
</dbReference>
<dbReference type="PIR" id="T11367">
    <property type="entry name" value="T11367"/>
</dbReference>
<dbReference type="RefSeq" id="NP_007385.1">
    <property type="nucleotide sequence ID" value="NC_001788.1"/>
</dbReference>
<dbReference type="SMR" id="P92479"/>
<dbReference type="GeneID" id="808062"/>
<dbReference type="KEGG" id="eai:808062"/>
<dbReference type="CTD" id="4509"/>
<dbReference type="Proteomes" id="UP000694387">
    <property type="component" value="Mitochondrion MT"/>
</dbReference>
<dbReference type="GO" id="GO:0031966">
    <property type="term" value="C:mitochondrial membrane"/>
    <property type="evidence" value="ECO:0007669"/>
    <property type="project" value="UniProtKB-SubCell"/>
</dbReference>
<dbReference type="GO" id="GO:0045259">
    <property type="term" value="C:proton-transporting ATP synthase complex"/>
    <property type="evidence" value="ECO:0000250"/>
    <property type="project" value="UniProtKB"/>
</dbReference>
<dbReference type="GO" id="GO:0015078">
    <property type="term" value="F:proton transmembrane transporter activity"/>
    <property type="evidence" value="ECO:0007669"/>
    <property type="project" value="InterPro"/>
</dbReference>
<dbReference type="GO" id="GO:0015986">
    <property type="term" value="P:proton motive force-driven ATP synthesis"/>
    <property type="evidence" value="ECO:0007669"/>
    <property type="project" value="InterPro"/>
</dbReference>
<dbReference type="InterPro" id="IPR039017">
    <property type="entry name" value="ATP8_mammal"/>
</dbReference>
<dbReference type="InterPro" id="IPR001421">
    <property type="entry name" value="ATP8_metazoa"/>
</dbReference>
<dbReference type="PANTHER" id="PTHR13722">
    <property type="entry name" value="ATP SYNTHASE PROTEIN 8"/>
    <property type="match status" value="1"/>
</dbReference>
<dbReference type="PANTHER" id="PTHR13722:SF0">
    <property type="entry name" value="ATP SYNTHASE PROTEIN 8"/>
    <property type="match status" value="1"/>
</dbReference>
<dbReference type="Pfam" id="PF00895">
    <property type="entry name" value="ATP-synt_8"/>
    <property type="match status" value="1"/>
</dbReference>
<geneLocation type="mitochondrion"/>
<reference key="1">
    <citation type="journal article" date="1996" name="J. Mol. Evol.">
        <title>The complete mitochondrial DNA (mtDNA) of the donkey and mtDNA comparisons among four closely related mammalian species-pairs.</title>
        <authorList>
            <person name="Xu X."/>
            <person name="Gullberg A."/>
            <person name="Arnason U."/>
        </authorList>
    </citation>
    <scope>NUCLEOTIDE SEQUENCE [GENOMIC DNA]</scope>
    <source>
        <tissue>Kidney</tissue>
    </source>
</reference>
<protein>
    <recommendedName>
        <fullName evidence="1">ATP synthase F(0) complex subunit 8</fullName>
    </recommendedName>
    <alternativeName>
        <fullName>A6L</fullName>
    </alternativeName>
    <alternativeName>
        <fullName>F-ATPase subunit 8</fullName>
    </alternativeName>
</protein>